<evidence type="ECO:0000255" key="1">
    <source>
        <dbReference type="HAMAP-Rule" id="MF_01551"/>
    </source>
</evidence>
<reference key="1">
    <citation type="submission" date="2009-06" db="EMBL/GenBank/DDBJ databases">
        <title>Complete sequence of Dickeya zeae Ech1591.</title>
        <authorList>
            <consortium name="US DOE Joint Genome Institute"/>
            <person name="Lucas S."/>
            <person name="Copeland A."/>
            <person name="Lapidus A."/>
            <person name="Glavina del Rio T."/>
            <person name="Tice H."/>
            <person name="Bruce D."/>
            <person name="Goodwin L."/>
            <person name="Pitluck S."/>
            <person name="Chertkov O."/>
            <person name="Brettin T."/>
            <person name="Detter J.C."/>
            <person name="Han C."/>
            <person name="Larimer F."/>
            <person name="Land M."/>
            <person name="Hauser L."/>
            <person name="Kyrpides N."/>
            <person name="Ovchinnikova G."/>
            <person name="Balakrishnan V."/>
            <person name="Glasner J."/>
            <person name="Perna N.T."/>
        </authorList>
    </citation>
    <scope>NUCLEOTIDE SEQUENCE [LARGE SCALE GENOMIC DNA]</scope>
    <source>
        <strain>Ech1591</strain>
    </source>
</reference>
<comment type="function">
    <text evidence="1">Catalyzes the 2'-O-methylation at nucleotide C2498 in 23S rRNA.</text>
</comment>
<comment type="catalytic activity">
    <reaction evidence="1">
        <text>cytidine(2498) in 23S rRNA + S-adenosyl-L-methionine = 2'-O-methylcytidine(2498) in 23S rRNA + S-adenosyl-L-homocysteine + H(+)</text>
        <dbReference type="Rhea" id="RHEA:42788"/>
        <dbReference type="Rhea" id="RHEA-COMP:10244"/>
        <dbReference type="Rhea" id="RHEA-COMP:10245"/>
        <dbReference type="ChEBI" id="CHEBI:15378"/>
        <dbReference type="ChEBI" id="CHEBI:57856"/>
        <dbReference type="ChEBI" id="CHEBI:59789"/>
        <dbReference type="ChEBI" id="CHEBI:74495"/>
        <dbReference type="ChEBI" id="CHEBI:82748"/>
        <dbReference type="EC" id="2.1.1.186"/>
    </reaction>
</comment>
<comment type="subunit">
    <text evidence="1">Monomer.</text>
</comment>
<comment type="subcellular location">
    <subcellularLocation>
        <location evidence="1">Cytoplasm</location>
    </subcellularLocation>
</comment>
<comment type="similarity">
    <text evidence="1">Belongs to the class I-like SAM-binding methyltransferase superfamily. RNA methyltransferase RlmE family. RlmM subfamily.</text>
</comment>
<dbReference type="EC" id="2.1.1.186" evidence="1"/>
<dbReference type="EMBL" id="CP001655">
    <property type="protein sequence ID" value="ACT07998.1"/>
    <property type="molecule type" value="Genomic_DNA"/>
</dbReference>
<dbReference type="RefSeq" id="WP_012770848.1">
    <property type="nucleotide sequence ID" value="NC_012912.1"/>
</dbReference>
<dbReference type="SMR" id="C6CEU3"/>
<dbReference type="STRING" id="561229.Dd1591_3176"/>
<dbReference type="GeneID" id="45081233"/>
<dbReference type="KEGG" id="dze:Dd1591_3176"/>
<dbReference type="eggNOG" id="COG2933">
    <property type="taxonomic scope" value="Bacteria"/>
</dbReference>
<dbReference type="HOGENOM" id="CLU_043780_0_0_6"/>
<dbReference type="OrthoDB" id="154490at2"/>
<dbReference type="Proteomes" id="UP000002735">
    <property type="component" value="Chromosome"/>
</dbReference>
<dbReference type="GO" id="GO:0005737">
    <property type="term" value="C:cytoplasm"/>
    <property type="evidence" value="ECO:0007669"/>
    <property type="project" value="UniProtKB-SubCell"/>
</dbReference>
<dbReference type="GO" id="GO:0008757">
    <property type="term" value="F:S-adenosylmethionine-dependent methyltransferase activity"/>
    <property type="evidence" value="ECO:0007669"/>
    <property type="project" value="UniProtKB-UniRule"/>
</dbReference>
<dbReference type="GO" id="GO:0032259">
    <property type="term" value="P:methylation"/>
    <property type="evidence" value="ECO:0007669"/>
    <property type="project" value="UniProtKB-KW"/>
</dbReference>
<dbReference type="GO" id="GO:0006364">
    <property type="term" value="P:rRNA processing"/>
    <property type="evidence" value="ECO:0007669"/>
    <property type="project" value="UniProtKB-UniRule"/>
</dbReference>
<dbReference type="Gene3D" id="3.30.2300.20">
    <property type="match status" value="1"/>
</dbReference>
<dbReference type="Gene3D" id="3.30.70.2810">
    <property type="match status" value="1"/>
</dbReference>
<dbReference type="Gene3D" id="3.40.50.150">
    <property type="entry name" value="Vaccinia Virus protein VP39"/>
    <property type="match status" value="1"/>
</dbReference>
<dbReference type="HAMAP" id="MF_01551">
    <property type="entry name" value="23SrRNA_methyltr_M"/>
    <property type="match status" value="1"/>
</dbReference>
<dbReference type="InterPro" id="IPR040739">
    <property type="entry name" value="RlmM_FDX"/>
</dbReference>
<dbReference type="InterPro" id="IPR048646">
    <property type="entry name" value="RlmM_THUMP-like"/>
</dbReference>
<dbReference type="InterPro" id="IPR002877">
    <property type="entry name" value="RNA_MeTrfase_FtsJ_dom"/>
</dbReference>
<dbReference type="InterPro" id="IPR011224">
    <property type="entry name" value="rRNA_MeTrfase_M"/>
</dbReference>
<dbReference type="InterPro" id="IPR029063">
    <property type="entry name" value="SAM-dependent_MTases_sf"/>
</dbReference>
<dbReference type="NCBIfam" id="NF008734">
    <property type="entry name" value="PRK11760.1"/>
    <property type="match status" value="1"/>
</dbReference>
<dbReference type="PANTHER" id="PTHR37524">
    <property type="entry name" value="RIBOSOMAL RNA LARGE SUBUNIT METHYLTRANSFERASE M"/>
    <property type="match status" value="1"/>
</dbReference>
<dbReference type="PANTHER" id="PTHR37524:SF2">
    <property type="entry name" value="RIBOSOMAL RNA METHYLTRANSFERASE FTSJ DOMAIN-CONTAINING PROTEIN"/>
    <property type="match status" value="1"/>
</dbReference>
<dbReference type="Pfam" id="PF01728">
    <property type="entry name" value="FtsJ"/>
    <property type="match status" value="1"/>
</dbReference>
<dbReference type="Pfam" id="PF18125">
    <property type="entry name" value="RlmM_FDX"/>
    <property type="match status" value="1"/>
</dbReference>
<dbReference type="Pfam" id="PF21239">
    <property type="entry name" value="RLMM_N"/>
    <property type="match status" value="1"/>
</dbReference>
<dbReference type="PIRSF" id="PIRSF028774">
    <property type="entry name" value="UCP028774"/>
    <property type="match status" value="1"/>
</dbReference>
<dbReference type="SUPFAM" id="SSF53335">
    <property type="entry name" value="S-adenosyl-L-methionine-dependent methyltransferases"/>
    <property type="match status" value="1"/>
</dbReference>
<keyword id="KW-0963">Cytoplasm</keyword>
<keyword id="KW-0489">Methyltransferase</keyword>
<keyword id="KW-0698">rRNA processing</keyword>
<keyword id="KW-0949">S-adenosyl-L-methionine</keyword>
<keyword id="KW-0808">Transferase</keyword>
<gene>
    <name evidence="1" type="primary">rlmM</name>
    <name type="ordered locus">Dd1591_3176</name>
</gene>
<accession>C6CEU3</accession>
<proteinExistence type="inferred from homology"/>
<feature type="chain" id="PRO_0000388981" description="Ribosomal RNA large subunit methyltransferase M">
    <location>
        <begin position="1"/>
        <end position="366"/>
    </location>
</feature>
<feature type="active site" description="Proton acceptor" evidence="1">
    <location>
        <position position="306"/>
    </location>
</feature>
<feature type="binding site" evidence="1">
    <location>
        <position position="188"/>
    </location>
    <ligand>
        <name>S-adenosyl-L-methionine</name>
        <dbReference type="ChEBI" id="CHEBI:59789"/>
    </ligand>
</feature>
<feature type="binding site" evidence="1">
    <location>
        <begin position="221"/>
        <end position="224"/>
    </location>
    <ligand>
        <name>S-adenosyl-L-methionine</name>
        <dbReference type="ChEBI" id="CHEBI:59789"/>
    </ligand>
</feature>
<feature type="binding site" evidence="1">
    <location>
        <position position="240"/>
    </location>
    <ligand>
        <name>S-adenosyl-L-methionine</name>
        <dbReference type="ChEBI" id="CHEBI:59789"/>
    </ligand>
</feature>
<feature type="binding site" evidence="1">
    <location>
        <position position="260"/>
    </location>
    <ligand>
        <name>S-adenosyl-L-methionine</name>
        <dbReference type="ChEBI" id="CHEBI:59789"/>
    </ligand>
</feature>
<feature type="binding site" evidence="1">
    <location>
        <position position="277"/>
    </location>
    <ligand>
        <name>S-adenosyl-L-methionine</name>
        <dbReference type="ChEBI" id="CHEBI:59789"/>
    </ligand>
</feature>
<sequence>MNKVILYCRPGFEKECAAEITDKAARYNVYGFVRVKDNSGYVVFECYQHEDADRLIKELPFQELVFARQMMVCGELLRDLPPEDRITPIVGMLTGVLERAGELRVEVPDTNESKELMKFCRKFTVPLRAALRENRILLAQEKASRPVIHVLFIAPGCCYVGYSYSNNNSPFYMGIPRLKFPADAPSRSTLKLEEAFHVFVPADEWDERLGSGMFAVDLGACPGGWTYQLVKRSMMVHAVDNGMMAPSLMDTGQVIHHQADGFRFEPPRNNIYWLVCDMVEKPAKVTNRMADWLVNGWCREVIFNLKLPMKKRYEEVTQNLALLAQRLEENGINFEIHAKHLYHDREEITVHARRIWGAIPGRRDER</sequence>
<protein>
    <recommendedName>
        <fullName evidence="1">Ribosomal RNA large subunit methyltransferase M</fullName>
        <ecNumber evidence="1">2.1.1.186</ecNumber>
    </recommendedName>
    <alternativeName>
        <fullName evidence="1">23S rRNA (cytidine2498-2'-O)-methyltransferase</fullName>
    </alternativeName>
    <alternativeName>
        <fullName evidence="1">23S rRNA 2'-O-ribose methyltransferase RlmM</fullName>
    </alternativeName>
</protein>
<name>RLMM_DICC1</name>
<organism>
    <name type="scientific">Dickeya chrysanthemi (strain Ech1591)</name>
    <name type="common">Dickeya zeae (strain Ech1591)</name>
    <dbReference type="NCBI Taxonomy" id="561229"/>
    <lineage>
        <taxon>Bacteria</taxon>
        <taxon>Pseudomonadati</taxon>
        <taxon>Pseudomonadota</taxon>
        <taxon>Gammaproteobacteria</taxon>
        <taxon>Enterobacterales</taxon>
        <taxon>Pectobacteriaceae</taxon>
        <taxon>Dickeya</taxon>
    </lineage>
</organism>